<evidence type="ECO:0000255" key="1">
    <source>
        <dbReference type="HAMAP-Rule" id="MF_00120"/>
    </source>
</evidence>
<sequence>MKKLTFHPDDSVHAFITTIPEVTYGDGPLSGVTVAVKDNISTKGIETTCASKILKGYIPPYDAHVVTLLKNAGAAIVGKTNMDEFGMGTTTENSAYGPTLNPLDHQRVPGGSSGGSAAAVAAGLVDCAIGSDTGGSIRCPAAFCGIVGLKPTYGRVSRFGLIAYANSLEQIGPMARDVQTLSNLYSVIAGHDSRDATSVDKPYKHNPVSDITGLKIGVPDEFFGEGVNPNVAEVVRQAIDTLESMGATAVPCTIPSMKYALSAYYVTCTSEASSNLARFDGVRYGPAVGTLKSWHDAYSEQRKAGFGKEVRRRIILGTFSLAAGYYGRYYQKAQTARQMVRDDFERIFRDVDVIAGPTMPDIAFKLGEKSDPLQMYLSDILTVPANLAGVPALSVPCGKINSMPVGLQLIGRYFEDERIIDTAYAYEQGRA</sequence>
<protein>
    <recommendedName>
        <fullName evidence="1">Glutamyl-tRNA(Gln) amidotransferase subunit A</fullName>
        <shortName evidence="1">Glu-ADT subunit A</shortName>
        <ecNumber evidence="1">6.3.5.7</ecNumber>
    </recommendedName>
</protein>
<accession>Q2FQM9</accession>
<organism>
    <name type="scientific">Methanospirillum hungatei JF-1 (strain ATCC 27890 / DSM 864 / NBRC 100397 / JF-1)</name>
    <dbReference type="NCBI Taxonomy" id="323259"/>
    <lineage>
        <taxon>Archaea</taxon>
        <taxon>Methanobacteriati</taxon>
        <taxon>Methanobacteriota</taxon>
        <taxon>Stenosarchaea group</taxon>
        <taxon>Methanomicrobia</taxon>
        <taxon>Methanomicrobiales</taxon>
        <taxon>Methanospirillaceae</taxon>
        <taxon>Methanospirillum</taxon>
    </lineage>
</organism>
<comment type="function">
    <text evidence="1">Allows the formation of correctly charged Gln-tRNA(Gln) through the transamidation of misacylated Glu-tRNA(Gln) in organisms which lack glutaminyl-tRNA synthetase. The reaction takes place in the presence of glutamine and ATP through an activated gamma-phospho-Glu-tRNA(Gln).</text>
</comment>
<comment type="catalytic activity">
    <reaction evidence="1">
        <text>L-glutamyl-tRNA(Gln) + L-glutamine + ATP + H2O = L-glutaminyl-tRNA(Gln) + L-glutamate + ADP + phosphate + H(+)</text>
        <dbReference type="Rhea" id="RHEA:17521"/>
        <dbReference type="Rhea" id="RHEA-COMP:9681"/>
        <dbReference type="Rhea" id="RHEA-COMP:9684"/>
        <dbReference type="ChEBI" id="CHEBI:15377"/>
        <dbReference type="ChEBI" id="CHEBI:15378"/>
        <dbReference type="ChEBI" id="CHEBI:29985"/>
        <dbReference type="ChEBI" id="CHEBI:30616"/>
        <dbReference type="ChEBI" id="CHEBI:43474"/>
        <dbReference type="ChEBI" id="CHEBI:58359"/>
        <dbReference type="ChEBI" id="CHEBI:78520"/>
        <dbReference type="ChEBI" id="CHEBI:78521"/>
        <dbReference type="ChEBI" id="CHEBI:456216"/>
        <dbReference type="EC" id="6.3.5.7"/>
    </reaction>
</comment>
<comment type="subunit">
    <text evidence="1">Heterotrimer of A, B and C subunits.</text>
</comment>
<comment type="similarity">
    <text evidence="1">Belongs to the amidase family. GatA subfamily.</text>
</comment>
<dbReference type="EC" id="6.3.5.7" evidence="1"/>
<dbReference type="EMBL" id="CP000254">
    <property type="protein sequence ID" value="ABD40763.1"/>
    <property type="molecule type" value="Genomic_DNA"/>
</dbReference>
<dbReference type="RefSeq" id="WP_011448042.1">
    <property type="nucleotide sequence ID" value="NC_007796.1"/>
</dbReference>
<dbReference type="SMR" id="Q2FQM9"/>
<dbReference type="FunCoup" id="Q2FQM9">
    <property type="interactions" value="115"/>
</dbReference>
<dbReference type="STRING" id="323259.Mhun_1013"/>
<dbReference type="EnsemblBacteria" id="ABD40763">
    <property type="protein sequence ID" value="ABD40763"/>
    <property type="gene ID" value="Mhun_1013"/>
</dbReference>
<dbReference type="GeneID" id="3924781"/>
<dbReference type="KEGG" id="mhu:Mhun_1013"/>
<dbReference type="eggNOG" id="arCOG01717">
    <property type="taxonomic scope" value="Archaea"/>
</dbReference>
<dbReference type="HOGENOM" id="CLU_009600_0_3_2"/>
<dbReference type="InParanoid" id="Q2FQM9"/>
<dbReference type="OrthoDB" id="7931at2157"/>
<dbReference type="Proteomes" id="UP000001941">
    <property type="component" value="Chromosome"/>
</dbReference>
<dbReference type="GO" id="GO:0030956">
    <property type="term" value="C:glutamyl-tRNA(Gln) amidotransferase complex"/>
    <property type="evidence" value="ECO:0007669"/>
    <property type="project" value="InterPro"/>
</dbReference>
<dbReference type="GO" id="GO:0005524">
    <property type="term" value="F:ATP binding"/>
    <property type="evidence" value="ECO:0007669"/>
    <property type="project" value="UniProtKB-KW"/>
</dbReference>
<dbReference type="GO" id="GO:0050567">
    <property type="term" value="F:glutaminyl-tRNA synthase (glutamine-hydrolyzing) activity"/>
    <property type="evidence" value="ECO:0007669"/>
    <property type="project" value="UniProtKB-UniRule"/>
</dbReference>
<dbReference type="GO" id="GO:0006412">
    <property type="term" value="P:translation"/>
    <property type="evidence" value="ECO:0007669"/>
    <property type="project" value="UniProtKB-UniRule"/>
</dbReference>
<dbReference type="Gene3D" id="3.90.1300.10">
    <property type="entry name" value="Amidase signature (AS) domain"/>
    <property type="match status" value="1"/>
</dbReference>
<dbReference type="HAMAP" id="MF_00120">
    <property type="entry name" value="GatA"/>
    <property type="match status" value="1"/>
</dbReference>
<dbReference type="InterPro" id="IPR000120">
    <property type="entry name" value="Amidase"/>
</dbReference>
<dbReference type="InterPro" id="IPR020556">
    <property type="entry name" value="Amidase_CS"/>
</dbReference>
<dbReference type="InterPro" id="IPR023631">
    <property type="entry name" value="Amidase_dom"/>
</dbReference>
<dbReference type="InterPro" id="IPR036928">
    <property type="entry name" value="AS_sf"/>
</dbReference>
<dbReference type="InterPro" id="IPR004412">
    <property type="entry name" value="GatA"/>
</dbReference>
<dbReference type="NCBIfam" id="TIGR00132">
    <property type="entry name" value="gatA"/>
    <property type="match status" value="1"/>
</dbReference>
<dbReference type="PANTHER" id="PTHR11895:SF151">
    <property type="entry name" value="GLUTAMYL-TRNA(GLN) AMIDOTRANSFERASE SUBUNIT A"/>
    <property type="match status" value="1"/>
</dbReference>
<dbReference type="PANTHER" id="PTHR11895">
    <property type="entry name" value="TRANSAMIDASE"/>
    <property type="match status" value="1"/>
</dbReference>
<dbReference type="Pfam" id="PF01425">
    <property type="entry name" value="Amidase"/>
    <property type="match status" value="1"/>
</dbReference>
<dbReference type="SUPFAM" id="SSF75304">
    <property type="entry name" value="Amidase signature (AS) enzymes"/>
    <property type="match status" value="1"/>
</dbReference>
<dbReference type="PROSITE" id="PS00571">
    <property type="entry name" value="AMIDASES"/>
    <property type="match status" value="1"/>
</dbReference>
<proteinExistence type="inferred from homology"/>
<keyword id="KW-0067">ATP-binding</keyword>
<keyword id="KW-0436">Ligase</keyword>
<keyword id="KW-0547">Nucleotide-binding</keyword>
<keyword id="KW-0648">Protein biosynthesis</keyword>
<keyword id="KW-1185">Reference proteome</keyword>
<reference key="1">
    <citation type="journal article" date="2016" name="Stand. Genomic Sci.">
        <title>Complete genome sequence of Methanospirillum hungatei type strain JF1.</title>
        <authorList>
            <person name="Gunsalus R.P."/>
            <person name="Cook L.E."/>
            <person name="Crable B."/>
            <person name="Rohlin L."/>
            <person name="McDonald E."/>
            <person name="Mouttaki H."/>
            <person name="Sieber J.R."/>
            <person name="Poweleit N."/>
            <person name="Zhou H."/>
            <person name="Lapidus A.L."/>
            <person name="Daligault H.E."/>
            <person name="Land M."/>
            <person name="Gilna P."/>
            <person name="Ivanova N."/>
            <person name="Kyrpides N."/>
            <person name="Culley D.E."/>
            <person name="McInerney M.J."/>
        </authorList>
    </citation>
    <scope>NUCLEOTIDE SEQUENCE [LARGE SCALE GENOMIC DNA]</scope>
    <source>
        <strain>ATCC 27890 / DSM 864 / NBRC 100397 / JF-1</strain>
    </source>
</reference>
<feature type="chain" id="PRO_0000241183" description="Glutamyl-tRNA(Gln) amidotransferase subunit A">
    <location>
        <begin position="1"/>
        <end position="431"/>
    </location>
</feature>
<feature type="active site" description="Charge relay system" evidence="1">
    <location>
        <position position="37"/>
    </location>
</feature>
<feature type="active site" description="Charge relay system" evidence="1">
    <location>
        <position position="112"/>
    </location>
</feature>
<feature type="active site" description="Acyl-ester intermediate" evidence="1">
    <location>
        <position position="136"/>
    </location>
</feature>
<gene>
    <name evidence="1" type="primary">gatA</name>
    <name type="ordered locus">Mhun_1013</name>
</gene>
<name>GATA_METHJ</name>